<name>RIMM_RHIE6</name>
<gene>
    <name evidence="1" type="primary">rimM</name>
    <name type="ordered locus">RHECIAT_CH0004242</name>
</gene>
<organism>
    <name type="scientific">Rhizobium etli (strain CIAT 652)</name>
    <dbReference type="NCBI Taxonomy" id="491916"/>
    <lineage>
        <taxon>Bacteria</taxon>
        <taxon>Pseudomonadati</taxon>
        <taxon>Pseudomonadota</taxon>
        <taxon>Alphaproteobacteria</taxon>
        <taxon>Hyphomicrobiales</taxon>
        <taxon>Rhizobiaceae</taxon>
        <taxon>Rhizobium/Agrobacterium group</taxon>
        <taxon>Rhizobium</taxon>
    </lineage>
</organism>
<reference key="1">
    <citation type="journal article" date="2010" name="Appl. Environ. Microbiol.">
        <title>Conserved symbiotic plasmid DNA sequences in the multireplicon pangenomic structure of Rhizobium etli.</title>
        <authorList>
            <person name="Gonzalez V."/>
            <person name="Acosta J.L."/>
            <person name="Santamaria R.I."/>
            <person name="Bustos P."/>
            <person name="Fernandez J.L."/>
            <person name="Hernandez Gonzalez I.L."/>
            <person name="Diaz R."/>
            <person name="Flores M."/>
            <person name="Palacios R."/>
            <person name="Mora J."/>
            <person name="Davila G."/>
        </authorList>
    </citation>
    <scope>NUCLEOTIDE SEQUENCE [LARGE SCALE GENOMIC DNA]</scope>
    <source>
        <strain>CIAT 652</strain>
    </source>
</reference>
<evidence type="ECO:0000255" key="1">
    <source>
        <dbReference type="HAMAP-Rule" id="MF_00014"/>
    </source>
</evidence>
<protein>
    <recommendedName>
        <fullName evidence="1">Ribosome maturation factor RimM</fullName>
    </recommendedName>
</protein>
<sequence length="193" mass="21213">MKEPMTKLENPVLMATIGGAQGLRGEVRAKAYTADPTALGDYGHLHSMDGRSFEILEIREMKNVVVVRFRGINDRNAAEALNGLELYIERDNLPDEELEDDEFYYADLEGLEARDDQGVSYGTVTGVFDFGAGDLLELKGPGKRPVLIPFSEASVLEIDLEAGTLLIDPLAAGLVDDPEELSKFTPDKPKKKK</sequence>
<keyword id="KW-0143">Chaperone</keyword>
<keyword id="KW-0963">Cytoplasm</keyword>
<keyword id="KW-0690">Ribosome biogenesis</keyword>
<keyword id="KW-0698">rRNA processing</keyword>
<accession>B3PR17</accession>
<dbReference type="EMBL" id="CP001074">
    <property type="protein sequence ID" value="ACE93171.1"/>
    <property type="molecule type" value="Genomic_DNA"/>
</dbReference>
<dbReference type="SMR" id="B3PR17"/>
<dbReference type="KEGG" id="rec:RHECIAT_CH0004242"/>
<dbReference type="eggNOG" id="COG0806">
    <property type="taxonomic scope" value="Bacteria"/>
</dbReference>
<dbReference type="HOGENOM" id="CLU_077636_0_1_5"/>
<dbReference type="Proteomes" id="UP000008817">
    <property type="component" value="Chromosome"/>
</dbReference>
<dbReference type="GO" id="GO:0005737">
    <property type="term" value="C:cytoplasm"/>
    <property type="evidence" value="ECO:0007669"/>
    <property type="project" value="UniProtKB-SubCell"/>
</dbReference>
<dbReference type="GO" id="GO:0005840">
    <property type="term" value="C:ribosome"/>
    <property type="evidence" value="ECO:0007669"/>
    <property type="project" value="InterPro"/>
</dbReference>
<dbReference type="GO" id="GO:0043022">
    <property type="term" value="F:ribosome binding"/>
    <property type="evidence" value="ECO:0007669"/>
    <property type="project" value="InterPro"/>
</dbReference>
<dbReference type="GO" id="GO:0042274">
    <property type="term" value="P:ribosomal small subunit biogenesis"/>
    <property type="evidence" value="ECO:0007669"/>
    <property type="project" value="UniProtKB-UniRule"/>
</dbReference>
<dbReference type="GO" id="GO:0006364">
    <property type="term" value="P:rRNA processing"/>
    <property type="evidence" value="ECO:0007669"/>
    <property type="project" value="UniProtKB-UniRule"/>
</dbReference>
<dbReference type="Gene3D" id="2.30.30.240">
    <property type="entry name" value="PRC-barrel domain"/>
    <property type="match status" value="1"/>
</dbReference>
<dbReference type="Gene3D" id="2.40.30.60">
    <property type="entry name" value="RimM"/>
    <property type="match status" value="1"/>
</dbReference>
<dbReference type="HAMAP" id="MF_00014">
    <property type="entry name" value="Ribosome_mat_RimM"/>
    <property type="match status" value="1"/>
</dbReference>
<dbReference type="InterPro" id="IPR027275">
    <property type="entry name" value="PRC-brl_dom"/>
</dbReference>
<dbReference type="InterPro" id="IPR011033">
    <property type="entry name" value="PRC_barrel-like_sf"/>
</dbReference>
<dbReference type="InterPro" id="IPR011961">
    <property type="entry name" value="RimM"/>
</dbReference>
<dbReference type="InterPro" id="IPR002676">
    <property type="entry name" value="RimM_N"/>
</dbReference>
<dbReference type="InterPro" id="IPR036976">
    <property type="entry name" value="RimM_N_sf"/>
</dbReference>
<dbReference type="InterPro" id="IPR009000">
    <property type="entry name" value="Transl_B-barrel_sf"/>
</dbReference>
<dbReference type="NCBIfam" id="TIGR02273">
    <property type="entry name" value="16S_RimM"/>
    <property type="match status" value="1"/>
</dbReference>
<dbReference type="PANTHER" id="PTHR33692">
    <property type="entry name" value="RIBOSOME MATURATION FACTOR RIMM"/>
    <property type="match status" value="1"/>
</dbReference>
<dbReference type="PANTHER" id="PTHR33692:SF1">
    <property type="entry name" value="RIBOSOME MATURATION FACTOR RIMM"/>
    <property type="match status" value="1"/>
</dbReference>
<dbReference type="Pfam" id="PF05239">
    <property type="entry name" value="PRC"/>
    <property type="match status" value="1"/>
</dbReference>
<dbReference type="Pfam" id="PF01782">
    <property type="entry name" value="RimM"/>
    <property type="match status" value="1"/>
</dbReference>
<dbReference type="SUPFAM" id="SSF50346">
    <property type="entry name" value="PRC-barrel domain"/>
    <property type="match status" value="1"/>
</dbReference>
<dbReference type="SUPFAM" id="SSF50447">
    <property type="entry name" value="Translation proteins"/>
    <property type="match status" value="1"/>
</dbReference>
<feature type="chain" id="PRO_0000351791" description="Ribosome maturation factor RimM">
    <location>
        <begin position="1"/>
        <end position="193"/>
    </location>
</feature>
<feature type="domain" description="PRC barrel" evidence="1">
    <location>
        <begin position="100"/>
        <end position="173"/>
    </location>
</feature>
<comment type="function">
    <text evidence="1">An accessory protein needed during the final step in the assembly of 30S ribosomal subunit, possibly for assembly of the head region. Essential for efficient processing of 16S rRNA. May be needed both before and after RbfA during the maturation of 16S rRNA. It has affinity for free ribosomal 30S subunits but not for 70S ribosomes.</text>
</comment>
<comment type="subunit">
    <text evidence="1">Binds ribosomal protein uS19.</text>
</comment>
<comment type="subcellular location">
    <subcellularLocation>
        <location evidence="1">Cytoplasm</location>
    </subcellularLocation>
</comment>
<comment type="domain">
    <text evidence="1">The PRC barrel domain binds ribosomal protein uS19.</text>
</comment>
<comment type="similarity">
    <text evidence="1">Belongs to the RimM family.</text>
</comment>
<proteinExistence type="inferred from homology"/>